<organism>
    <name type="scientific">Mus musculus</name>
    <name type="common">Mouse</name>
    <dbReference type="NCBI Taxonomy" id="10090"/>
    <lineage>
        <taxon>Eukaryota</taxon>
        <taxon>Metazoa</taxon>
        <taxon>Chordata</taxon>
        <taxon>Craniata</taxon>
        <taxon>Vertebrata</taxon>
        <taxon>Euteleostomi</taxon>
        <taxon>Mammalia</taxon>
        <taxon>Eutheria</taxon>
        <taxon>Euarchontoglires</taxon>
        <taxon>Glires</taxon>
        <taxon>Rodentia</taxon>
        <taxon>Myomorpha</taxon>
        <taxon>Muroidea</taxon>
        <taxon>Muridae</taxon>
        <taxon>Murinae</taxon>
        <taxon>Mus</taxon>
        <taxon>Mus</taxon>
    </lineage>
</organism>
<sequence length="236" mass="25815">MGVEGCTKCIKYLLFVFNFVFWLAGGVILGVALWLRHDPQTTSLLYLELGNKPAPNTFYVGIYILIAVGAVMMFVGFLGCYGAIQESQCLLGTFFTCLVILFACEVAAGIWGFVNKDQIAKDVKQFYDQALQQAVMDDDANNAKAVVKTFHETLNCCGSNALTTLTTTILRNSLCPSGGNILTPLLQQDCHQKIDELFSGKLYLIGIAAIVVAVIMIFEMILSMVLCCGIRNSSVY</sequence>
<evidence type="ECO:0000250" key="1">
    <source>
        <dbReference type="UniProtKB" id="P60033"/>
    </source>
</evidence>
<evidence type="ECO:0000255" key="2"/>
<evidence type="ECO:0000269" key="3">
    <source>
    </source>
</evidence>
<evidence type="ECO:0000269" key="4">
    <source>
    </source>
</evidence>
<evidence type="ECO:0000269" key="5">
    <source>
    </source>
</evidence>
<evidence type="ECO:0000269" key="6">
    <source>
    </source>
</evidence>
<evidence type="ECO:0000269" key="7">
    <source>
    </source>
</evidence>
<evidence type="ECO:0000269" key="8">
    <source>
    </source>
</evidence>
<evidence type="ECO:0000269" key="9">
    <source>
    </source>
</evidence>
<evidence type="ECO:0000269" key="10">
    <source>
    </source>
</evidence>
<evidence type="ECO:0000269" key="11">
    <source>
    </source>
</evidence>
<evidence type="ECO:0000269" key="12">
    <source>
    </source>
</evidence>
<evidence type="ECO:0000269" key="13">
    <source>
    </source>
</evidence>
<evidence type="ECO:0000269" key="14">
    <source>
    </source>
</evidence>
<evidence type="ECO:0000269" key="15">
    <source>
    </source>
</evidence>
<evidence type="ECO:0000303" key="16">
    <source>
    </source>
</evidence>
<evidence type="ECO:0000305" key="17"/>
<evidence type="ECO:0000312" key="18">
    <source>
        <dbReference type="MGI" id="MGI:1096398"/>
    </source>
</evidence>
<evidence type="ECO:0007744" key="19">
    <source>
        <dbReference type="PDB" id="3X0F"/>
    </source>
</evidence>
<evidence type="ECO:0007829" key="20">
    <source>
        <dbReference type="PDB" id="3X0F"/>
    </source>
</evidence>
<comment type="function">
    <text evidence="1 3 7 9 10 12 13">Structural component of specialized membrane microdomains known as tetraspanin-enriched microdomains (TERMs), which act as platforms for receptor clustering and signaling. Essential for trafficking and compartmentalization of CD19 receptor on the cell surface of activated B cells (PubMed:23499492). Upon initial encounter with a microbial pathogen, enables the assembly of CD19-CR2 and B cell receptor complexes at signaling TERMs, lowering the threshold dose of antigen required to trigger B cell clonal expansion and humoral immune response (By similarity). In T cells, associates with CD4 or CD8 coreceptors and defines the maturation state of antigen-induced synapses with B cells (By similarity). Facilitates localization of CD3 in these immune synapses, required for costimulation and sustained activation of T cells, preferentially triggering T helper type 2 immune response (PubMed:11046035). Can act both as positive and negative regulator of homotypic or heterotypic cell-cell fusion processes. In myoblasts, associates with another tetraspanin CD9 in complex with PTGFRN and inhibits myotube fusion during muscle regeneration (PubMed:23575678). In macrophages, associates with CD9 and beta-1 and beta-2 integrins, and prevents macrophage fusion into multinucleated giant cells specialized in ingesting complement-opsonized large particles. Also prevents the fusion between mononuclear cell progenitors into osteoclasts in charge of bone resorption. Positively regulates sperm-egg fusion and may be involved in the acrosome reaction (PubMed:16380109, PubMed:17290409). Regulates protein trafficking in intracellular compartments. In T cells, associates with dNTPase SAMHD1 and defines its subcellular location, enabling its degradation by the proteasome and thereby controlling intracellular dNTP levels (By similarity). Also regulates integrin-dependent migration of macrophages, particularly relevant for inflammatory response in the lung (PubMed:18662991).</text>
</comment>
<comment type="function">
    <text evidence="5">(Microbial infection) Specifically required for Plasmodium yoelii infectivity of hepatocytes, controlling sporozoite entry in hepatocytes via the parasitophorous vacuole and subsequent parasite differentiation to exoerythrocytic forms.</text>
</comment>
<comment type="subunit">
    <text evidence="1 4 8 13 14">Homodimer (By similarity). Part of a complex composed of CD19, CR2/CD21, CD81 and IFITM1/CD225 in the membrane of mature B cells. Interacts (via the second extracellular domain) with CD19; this interaction is initiated early during biosynthesis in the ER and enables trafficking of only properly folded CD19 (By similarity). Part of a complex that includes MHC class II/HLA-DR molecules and IFITM1. Interacts with IFITM1 (By similarity). Interacts with IFITM2 and IFITM3 (PubMed:16395393). Part of integrin-tetraspanin complex composed of CD9, CD81, beta-1 and beta-2 integrins in the membrane of monocyte/macrophages (By similarity). Interacts (via the second extracellular domain) with integrin ITGAV:ITGB3 (By similarity). Interacts with CD247/CD3 zeta, ICAM1 and CD9 at the immune synapse on T cell membrane (By similarity). Part of a GPCR-tetraspanin complex consisting at least of ADGRG1, CD81, possibly CD9, and GNA11 in which CD81 enhances the association of ADGRG1 with GNA11 (By similarity). Part of a complex composed of CD9, CD81, PTGFRN and IGSF8 (PubMed:23575678). Interacts directly with IGSF8 (PubMed:11673522). Interacts with CD53 and SCIMP (By similarity). Interacts with SAMHD1 (via its C-terminus) (By similarity). Interacts with glypican GPC3 and with the transcriptional repressor HHEX; binding to GPC3 decreases the availability of free CD81 for binding to HHEX, resulting in nuclear translocation of HHEX and transcriptional repression (PubMed:23665349). Interacts with CLDN1 (By similarity). Interacts with CLDN6 and CLDN9 (By similarity).</text>
</comment>
<comment type="subcellular location">
    <subcellularLocation>
        <location evidence="11">Cell membrane</location>
        <topology evidence="2">Multi-pass membrane protein</topology>
    </subcellularLocation>
    <subcellularLocation>
        <location evidence="1">Basolateral cell membrane</location>
        <topology evidence="2">Multi-pass membrane protein</topology>
    </subcellularLocation>
    <text evidence="1">Associates with CLDN1 and the CLDN1-CD81 complex localizes to the basolateral cell membrane.</text>
</comment>
<comment type="tissue specificity">
    <text evidence="5 7 9 11 13">Expressed in oocytes (at protein level) (PubMed:16380109, PubMed:17290409, PubMed:23213457). Highly expressed in granulosa cells (PubMed:16380109). Expressed in skeletal muscle mainly in endothelial cells of endomysial capillaries, in satellite cells and myoblasts (at protein level) (PubMed:23575678). Expressed in hepatocytes (at protein level) (PubMed:12483205).</text>
</comment>
<comment type="induction">
    <text evidence="13">Up-regulated in response to notexin-induced acute myoinjury.</text>
</comment>
<comment type="domain">
    <text evidence="1">Binds cholesterol in a cavity lined by the transmembrane spans.</text>
</comment>
<comment type="PTM">
    <text evidence="17">Not glycosylated.</text>
</comment>
<comment type="PTM">
    <text evidence="1">Likely constitutively palmitoylated at low levels. Protein palmitoylation is up-regulated upon coligation of BCR and CD9-C2R-CD81 complexes in lipid rafts.</text>
</comment>
<comment type="disruption phenotype">
    <text evidence="3 6 7 9 10 13">Knockout mice exhibit reduced female fertitily and impaired egg-sperm fusion (PubMed:16380109, PubMed:17290409). In response to notexin-induced acute myoinjury, mutant mice display abnormal muscle regeneration characterized by typical giant distrophic myofibres (PubMed:23575678). Mutant mice show reduced allergen-induced lung inflammation, eosinophilia and mucin production (PubMed:11046035). These mice spontaneously develop multinucleated giant cells (MGCs) and show enhanced osteoclastogenesis when compared to wild-type littermates (PubMed:12796480). CD81 and CD9 double knockout mice develop pulmonary emphysema, reminiscent of chronic obstructive pulmonary disease in human (PubMed:18662991).</text>
</comment>
<comment type="disruption phenotype">
    <text evidence="5">(Microbial infection) Mutant mice are refractory to Plasmodium yoelii sporozoite infection.</text>
</comment>
<comment type="similarity">
    <text evidence="17">Belongs to the tetraspanin (TM4SF) family.</text>
</comment>
<accession>P35762</accession>
<accession>Q91V78</accession>
<feature type="chain" id="PRO_0000219222" description="CD81 antigen">
    <location>
        <begin position="1"/>
        <end position="236"/>
    </location>
</feature>
<feature type="topological domain" description="Cytoplasmic" evidence="17">
    <location>
        <begin position="1"/>
        <end position="12"/>
    </location>
</feature>
<feature type="transmembrane region" description="Helical" evidence="1">
    <location>
        <begin position="13"/>
        <end position="33"/>
    </location>
</feature>
<feature type="topological domain" description="Extracellular" evidence="17">
    <location>
        <begin position="34"/>
        <end position="63"/>
    </location>
</feature>
<feature type="transmembrane region" description="Helical" evidence="1">
    <location>
        <begin position="64"/>
        <end position="84"/>
    </location>
</feature>
<feature type="topological domain" description="Cytoplasmic" evidence="17">
    <location>
        <begin position="85"/>
        <end position="89"/>
    </location>
</feature>
<feature type="transmembrane region" description="Helical" evidence="1">
    <location>
        <begin position="90"/>
        <end position="112"/>
    </location>
</feature>
<feature type="topological domain" description="Extracellular" evidence="17">
    <location>
        <begin position="113"/>
        <end position="201"/>
    </location>
</feature>
<feature type="transmembrane region" description="Helical" evidence="1">
    <location>
        <begin position="202"/>
        <end position="224"/>
    </location>
</feature>
<feature type="topological domain" description="Cytoplasmic" evidence="17">
    <location>
        <begin position="225"/>
        <end position="236"/>
    </location>
</feature>
<feature type="binding site" evidence="1">
    <location>
        <position position="219"/>
    </location>
    <ligand>
        <name>cholesterol</name>
        <dbReference type="ChEBI" id="CHEBI:16113"/>
    </ligand>
</feature>
<feature type="site" description="Important for interaction with integrin" evidence="1">
    <location>
        <position position="116"/>
    </location>
</feature>
<feature type="site" description="Important for interaction with integrin" evidence="1">
    <location>
        <position position="144"/>
    </location>
</feature>
<feature type="site" description="Important for interaction with integrin" evidence="1">
    <location>
        <position position="148"/>
    </location>
</feature>
<feature type="disulfide bond" evidence="15 19">
    <location>
        <begin position="156"/>
        <end position="190"/>
    </location>
</feature>
<feature type="disulfide bond" evidence="15 19">
    <location>
        <begin position="157"/>
        <end position="175"/>
    </location>
</feature>
<feature type="sequence conflict" description="In Ref. 1; AAB19417." evidence="17" ref="1">
    <original>S</original>
    <variation>T</variation>
    <location>
        <position position="173"/>
    </location>
</feature>
<feature type="helix" evidence="20">
    <location>
        <begin position="116"/>
        <end position="136"/>
    </location>
</feature>
<feature type="helix" evidence="20">
    <location>
        <begin position="141"/>
        <end position="154"/>
    </location>
</feature>
<feature type="helix" evidence="20">
    <location>
        <begin position="161"/>
        <end position="170"/>
    </location>
</feature>
<feature type="helix" evidence="20">
    <location>
        <begin position="172"/>
        <end position="174"/>
    </location>
</feature>
<feature type="helix" evidence="20">
    <location>
        <begin position="183"/>
        <end position="186"/>
    </location>
</feature>
<feature type="helix" evidence="20">
    <location>
        <begin position="190"/>
        <end position="197"/>
    </location>
</feature>
<proteinExistence type="evidence at protein level"/>
<gene>
    <name evidence="16 18" type="primary">Cd81</name>
    <name type="synonym">Tapa1</name>
</gene>
<name>CD81_MOUSE</name>
<dbReference type="EMBL" id="S45012">
    <property type="protein sequence ID" value="AAB19417.1"/>
    <property type="molecule type" value="Genomic_DNA"/>
</dbReference>
<dbReference type="EMBL" id="S44957">
    <property type="protein sequence ID" value="AAB19417.1"/>
    <property type="status" value="JOINED"/>
    <property type="molecule type" value="Genomic_DNA"/>
</dbReference>
<dbReference type="EMBL" id="S44966">
    <property type="protein sequence ID" value="AAB19417.1"/>
    <property type="status" value="JOINED"/>
    <property type="molecule type" value="Genomic_DNA"/>
</dbReference>
<dbReference type="EMBL" id="S45001">
    <property type="protein sequence ID" value="AAB19417.1"/>
    <property type="status" value="JOINED"/>
    <property type="molecule type" value="Genomic_DNA"/>
</dbReference>
<dbReference type="EMBL" id="S45008">
    <property type="protein sequence ID" value="AAB19417.1"/>
    <property type="status" value="JOINED"/>
    <property type="molecule type" value="Genomic_DNA"/>
</dbReference>
<dbReference type="EMBL" id="S45010">
    <property type="protein sequence ID" value="AAB19417.1"/>
    <property type="status" value="JOINED"/>
    <property type="molecule type" value="Genomic_DNA"/>
</dbReference>
<dbReference type="EMBL" id="AJ251835">
    <property type="protein sequence ID" value="CAB94774.1"/>
    <property type="molecule type" value="Genomic_DNA"/>
</dbReference>
<dbReference type="EMBL" id="AK166521">
    <property type="protein sequence ID" value="BAE38825.1"/>
    <property type="molecule type" value="mRNA"/>
</dbReference>
<dbReference type="EMBL" id="AK170741">
    <property type="protein sequence ID" value="BAE41994.1"/>
    <property type="molecule type" value="mRNA"/>
</dbReference>
<dbReference type="EMBL" id="AC015800">
    <property type="status" value="NOT_ANNOTATED_CDS"/>
    <property type="molecule type" value="Genomic_DNA"/>
</dbReference>
<dbReference type="EMBL" id="CH466531">
    <property type="protein sequence ID" value="EDL18195.1"/>
    <property type="molecule type" value="Genomic_DNA"/>
</dbReference>
<dbReference type="EMBL" id="BC011433">
    <property type="protein sequence ID" value="AAH11433.1"/>
    <property type="molecule type" value="mRNA"/>
</dbReference>
<dbReference type="EMBL" id="X59047">
    <property type="status" value="NOT_ANNOTATED_CDS"/>
    <property type="molecule type" value="mRNA"/>
</dbReference>
<dbReference type="CCDS" id="CCDS22038.1"/>
<dbReference type="PIR" id="A46472">
    <property type="entry name" value="A46472"/>
</dbReference>
<dbReference type="RefSeq" id="NP_598416.1">
    <property type="nucleotide sequence ID" value="NM_133655.2"/>
</dbReference>
<dbReference type="PDB" id="3X0F">
    <property type="method" value="X-ray"/>
    <property type="resolution" value="1.47 A"/>
    <property type="chains" value="A/B=113-202"/>
</dbReference>
<dbReference type="PDBsum" id="3X0F"/>
<dbReference type="SMR" id="P35762"/>
<dbReference type="BioGRID" id="198613">
    <property type="interactions" value="25"/>
</dbReference>
<dbReference type="FunCoup" id="P35762">
    <property type="interactions" value="219"/>
</dbReference>
<dbReference type="IntAct" id="P35762">
    <property type="interactions" value="1"/>
</dbReference>
<dbReference type="STRING" id="10090.ENSMUSP00000043768"/>
<dbReference type="GlyGen" id="P35762">
    <property type="glycosylation" value="1 site, 1 O-linked glycan (1 site)"/>
</dbReference>
<dbReference type="iPTMnet" id="P35762"/>
<dbReference type="PhosphoSitePlus" id="P35762"/>
<dbReference type="SwissPalm" id="P35762"/>
<dbReference type="jPOST" id="P35762"/>
<dbReference type="PaxDb" id="10090-ENSMUSP00000043768"/>
<dbReference type="PeptideAtlas" id="P35762"/>
<dbReference type="ProteomicsDB" id="265630"/>
<dbReference type="Pumba" id="P35762"/>
<dbReference type="Antibodypedia" id="1570">
    <property type="antibodies" value="1358 antibodies from 46 providers"/>
</dbReference>
<dbReference type="DNASU" id="12520"/>
<dbReference type="Ensembl" id="ENSMUST00000037941.10">
    <property type="protein sequence ID" value="ENSMUSP00000043768.10"/>
    <property type="gene ID" value="ENSMUSG00000037706.18"/>
</dbReference>
<dbReference type="GeneID" id="12520"/>
<dbReference type="KEGG" id="mmu:12520"/>
<dbReference type="UCSC" id="uc009kou.2">
    <property type="organism name" value="mouse"/>
</dbReference>
<dbReference type="AGR" id="MGI:1096398"/>
<dbReference type="CTD" id="975"/>
<dbReference type="MGI" id="MGI:1096398">
    <property type="gene designation" value="Cd81"/>
</dbReference>
<dbReference type="VEuPathDB" id="HostDB:ENSMUSG00000037706"/>
<dbReference type="eggNOG" id="KOG3882">
    <property type="taxonomic scope" value="Eukaryota"/>
</dbReference>
<dbReference type="GeneTree" id="ENSGT00940000158805"/>
<dbReference type="HOGENOM" id="CLU_055524_10_0_1"/>
<dbReference type="InParanoid" id="P35762"/>
<dbReference type="OMA" id="HETLSCC"/>
<dbReference type="OrthoDB" id="5870230at2759"/>
<dbReference type="PhylomeDB" id="P35762"/>
<dbReference type="TreeFam" id="TF352895"/>
<dbReference type="Reactome" id="R-MMU-198933">
    <property type="pathway name" value="Immunoregulatory interactions between a Lymphoid and a non-Lymphoid cell"/>
</dbReference>
<dbReference type="Reactome" id="R-MMU-977606">
    <property type="pathway name" value="Regulation of Complement cascade"/>
</dbReference>
<dbReference type="BioGRID-ORCS" id="12520">
    <property type="hits" value="1 hit in 79 CRISPR screens"/>
</dbReference>
<dbReference type="ChiTaRS" id="Cd81">
    <property type="organism name" value="mouse"/>
</dbReference>
<dbReference type="EvolutionaryTrace" id="P35762"/>
<dbReference type="PRO" id="PR:P35762"/>
<dbReference type="Proteomes" id="UP000000589">
    <property type="component" value="Chromosome 7"/>
</dbReference>
<dbReference type="RNAct" id="P35762">
    <property type="molecule type" value="protein"/>
</dbReference>
<dbReference type="Bgee" id="ENSMUSG00000037706">
    <property type="expression patterns" value="Expressed in aortic valve and 275 other cell types or tissues"/>
</dbReference>
<dbReference type="ExpressionAtlas" id="P35762">
    <property type="expression patterns" value="baseline and differential"/>
</dbReference>
<dbReference type="GO" id="GO:0016323">
    <property type="term" value="C:basolateral plasma membrane"/>
    <property type="evidence" value="ECO:0007669"/>
    <property type="project" value="UniProtKB-SubCell"/>
</dbReference>
<dbReference type="GO" id="GO:0005829">
    <property type="term" value="C:cytosol"/>
    <property type="evidence" value="ECO:0007669"/>
    <property type="project" value="Ensembl"/>
</dbReference>
<dbReference type="GO" id="GO:0070062">
    <property type="term" value="C:extracellular exosome"/>
    <property type="evidence" value="ECO:0007669"/>
    <property type="project" value="Ensembl"/>
</dbReference>
<dbReference type="GO" id="GO:0001772">
    <property type="term" value="C:immunological synapse"/>
    <property type="evidence" value="ECO:0000250"/>
    <property type="project" value="UniProtKB"/>
</dbReference>
<dbReference type="GO" id="GO:0016020">
    <property type="term" value="C:membrane"/>
    <property type="evidence" value="ECO:0000314"/>
    <property type="project" value="UniProtKB"/>
</dbReference>
<dbReference type="GO" id="GO:0005886">
    <property type="term" value="C:plasma membrane"/>
    <property type="evidence" value="ECO:0000250"/>
    <property type="project" value="UniProtKB"/>
</dbReference>
<dbReference type="GO" id="GO:0097197">
    <property type="term" value="C:tetraspanin-enriched microdomain"/>
    <property type="evidence" value="ECO:0000250"/>
    <property type="project" value="UniProtKB"/>
</dbReference>
<dbReference type="GO" id="GO:0015485">
    <property type="term" value="F:cholesterol binding"/>
    <property type="evidence" value="ECO:0000250"/>
    <property type="project" value="UniProtKB"/>
</dbReference>
<dbReference type="GO" id="GO:0005178">
    <property type="term" value="F:integrin binding"/>
    <property type="evidence" value="ECO:0000250"/>
    <property type="project" value="UniProtKB"/>
</dbReference>
<dbReference type="GO" id="GO:0042289">
    <property type="term" value="F:MHC class II protein binding"/>
    <property type="evidence" value="ECO:0007669"/>
    <property type="project" value="Ensembl"/>
</dbReference>
<dbReference type="GO" id="GO:1990459">
    <property type="term" value="F:transferrin receptor binding"/>
    <property type="evidence" value="ECO:0007669"/>
    <property type="project" value="Ensembl"/>
</dbReference>
<dbReference type="GO" id="GO:0001618">
    <property type="term" value="F:virus receptor activity"/>
    <property type="evidence" value="ECO:0007669"/>
    <property type="project" value="Ensembl"/>
</dbReference>
<dbReference type="GO" id="GO:0035783">
    <property type="term" value="P:CD4-positive, alpha-beta T cell costimulation"/>
    <property type="evidence" value="ECO:0000250"/>
    <property type="project" value="UniProtKB"/>
</dbReference>
<dbReference type="GO" id="GO:0071404">
    <property type="term" value="P:cellular response to low-density lipoprotein particle stimulus"/>
    <property type="evidence" value="ECO:0000314"/>
    <property type="project" value="UniProtKB"/>
</dbReference>
<dbReference type="GO" id="GO:0002455">
    <property type="term" value="P:humoral immune response mediated by circulating immunoglobulin"/>
    <property type="evidence" value="ECO:0000250"/>
    <property type="project" value="UniProtKB"/>
</dbReference>
<dbReference type="GO" id="GO:0001771">
    <property type="term" value="P:immunological synapse formation"/>
    <property type="evidence" value="ECO:0000250"/>
    <property type="project" value="UniProtKB"/>
</dbReference>
<dbReference type="GO" id="GO:0034238">
    <property type="term" value="P:macrophage fusion"/>
    <property type="evidence" value="ECO:0000315"/>
    <property type="project" value="UniProtKB"/>
</dbReference>
<dbReference type="GO" id="GO:0014905">
    <property type="term" value="P:myoblast fusion involved in skeletal muscle regeneration"/>
    <property type="evidence" value="ECO:0000315"/>
    <property type="project" value="UniProtKB"/>
</dbReference>
<dbReference type="GO" id="GO:0072675">
    <property type="term" value="P:osteoclast fusion"/>
    <property type="evidence" value="ECO:0000315"/>
    <property type="project" value="UniProtKB"/>
</dbReference>
<dbReference type="GO" id="GO:1905676">
    <property type="term" value="P:positive regulation of adaptive immune memory response"/>
    <property type="evidence" value="ECO:0007669"/>
    <property type="project" value="Ensembl"/>
</dbReference>
<dbReference type="GO" id="GO:0050871">
    <property type="term" value="P:positive regulation of B cell activation"/>
    <property type="evidence" value="ECO:0000315"/>
    <property type="project" value="UniProtKB"/>
</dbReference>
<dbReference type="GO" id="GO:0030890">
    <property type="term" value="P:positive regulation of B cell proliferation"/>
    <property type="evidence" value="ECO:0000304"/>
    <property type="project" value="UniProtKB"/>
</dbReference>
<dbReference type="GO" id="GO:0050861">
    <property type="term" value="P:positive regulation of B cell receptor signaling pathway"/>
    <property type="evidence" value="ECO:0000315"/>
    <property type="project" value="UniProtKB"/>
</dbReference>
<dbReference type="GO" id="GO:2000563">
    <property type="term" value="P:positive regulation of CD4-positive, alpha-beta T cell proliferation"/>
    <property type="evidence" value="ECO:0000250"/>
    <property type="project" value="UniProtKB"/>
</dbReference>
<dbReference type="GO" id="GO:0002863">
    <property type="term" value="P:positive regulation of inflammatory response to antigenic stimulus"/>
    <property type="evidence" value="ECO:0000315"/>
    <property type="project" value="UniProtKB"/>
</dbReference>
<dbReference type="GO" id="GO:0043410">
    <property type="term" value="P:positive regulation of MAPK cascade"/>
    <property type="evidence" value="ECO:0000250"/>
    <property type="project" value="UniProtKB"/>
</dbReference>
<dbReference type="GO" id="GO:1904352">
    <property type="term" value="P:positive regulation of protein catabolic process in the vacuole"/>
    <property type="evidence" value="ECO:0007669"/>
    <property type="project" value="Ensembl"/>
</dbReference>
<dbReference type="GO" id="GO:0070863">
    <property type="term" value="P:positive regulation of protein exit from endoplasmic reticulum"/>
    <property type="evidence" value="ECO:0000250"/>
    <property type="project" value="UniProtKB"/>
</dbReference>
<dbReference type="GO" id="GO:1903911">
    <property type="term" value="P:positive regulation of receptor clustering"/>
    <property type="evidence" value="ECO:0000315"/>
    <property type="project" value="UniProtKB"/>
</dbReference>
<dbReference type="GO" id="GO:2001190">
    <property type="term" value="P:positive regulation of T cell activation via T cell receptor contact with antigen bound to MHC molecule on antigen presenting cell"/>
    <property type="evidence" value="ECO:0000315"/>
    <property type="project" value="UniProtKB"/>
</dbReference>
<dbReference type="GO" id="GO:0050862">
    <property type="term" value="P:positive regulation of T cell receptor signaling pathway"/>
    <property type="evidence" value="ECO:0000250"/>
    <property type="project" value="UniProtKB"/>
</dbReference>
<dbReference type="GO" id="GO:2000553">
    <property type="term" value="P:positive regulation of T-helper 2 cell cytokine production"/>
    <property type="evidence" value="ECO:0000315"/>
    <property type="project" value="UniProtKB"/>
</dbReference>
<dbReference type="GO" id="GO:0045944">
    <property type="term" value="P:positive regulation of transcription by RNA polymerase II"/>
    <property type="evidence" value="ECO:0007669"/>
    <property type="project" value="Ensembl"/>
</dbReference>
<dbReference type="GO" id="GO:0061462">
    <property type="term" value="P:protein localization to lysosome"/>
    <property type="evidence" value="ECO:0007669"/>
    <property type="project" value="Ensembl"/>
</dbReference>
<dbReference type="GO" id="GO:0072659">
    <property type="term" value="P:protein localization to plasma membrane"/>
    <property type="evidence" value="ECO:0000250"/>
    <property type="project" value="UniProtKB"/>
</dbReference>
<dbReference type="GO" id="GO:0031623">
    <property type="term" value="P:receptor internalization"/>
    <property type="evidence" value="ECO:0000314"/>
    <property type="project" value="UniProtKB"/>
</dbReference>
<dbReference type="GO" id="GO:2000145">
    <property type="term" value="P:regulation of cell motility"/>
    <property type="evidence" value="ECO:0000316"/>
    <property type="project" value="MGI"/>
</dbReference>
<dbReference type="GO" id="GO:1905521">
    <property type="term" value="P:regulation of macrophage migration"/>
    <property type="evidence" value="ECO:0000314"/>
    <property type="project" value="UniProtKB"/>
</dbReference>
<dbReference type="GO" id="GO:0031647">
    <property type="term" value="P:regulation of protein stability"/>
    <property type="evidence" value="ECO:0007669"/>
    <property type="project" value="Ensembl"/>
</dbReference>
<dbReference type="CDD" id="cd03151">
    <property type="entry name" value="CD81_like_LEL"/>
    <property type="match status" value="1"/>
</dbReference>
<dbReference type="FunFam" id="1.10.1450.10:FF:000010">
    <property type="entry name" value="Tetraspanin"/>
    <property type="match status" value="1"/>
</dbReference>
<dbReference type="Gene3D" id="1.10.1450.10">
    <property type="entry name" value="Tetraspanin"/>
    <property type="match status" value="1"/>
</dbReference>
<dbReference type="InterPro" id="IPR018499">
    <property type="entry name" value="Tetraspanin/Peripherin"/>
</dbReference>
<dbReference type="InterPro" id="IPR000301">
    <property type="entry name" value="Tetraspanin_animals"/>
</dbReference>
<dbReference type="InterPro" id="IPR018503">
    <property type="entry name" value="Tetraspanin_CS"/>
</dbReference>
<dbReference type="InterPro" id="IPR008952">
    <property type="entry name" value="Tetraspanin_EC2_sf"/>
</dbReference>
<dbReference type="PANTHER" id="PTHR19282:SF214">
    <property type="entry name" value="CD81 ANTIGEN"/>
    <property type="match status" value="1"/>
</dbReference>
<dbReference type="PANTHER" id="PTHR19282">
    <property type="entry name" value="TETRASPANIN"/>
    <property type="match status" value="1"/>
</dbReference>
<dbReference type="Pfam" id="PF00335">
    <property type="entry name" value="Tetraspanin"/>
    <property type="match status" value="1"/>
</dbReference>
<dbReference type="PIRSF" id="PIRSF002419">
    <property type="entry name" value="Tetraspanin"/>
    <property type="match status" value="1"/>
</dbReference>
<dbReference type="PRINTS" id="PR00259">
    <property type="entry name" value="TMFOUR"/>
</dbReference>
<dbReference type="SUPFAM" id="SSF48652">
    <property type="entry name" value="Tetraspanin"/>
    <property type="match status" value="1"/>
</dbReference>
<dbReference type="PROSITE" id="PS00421">
    <property type="entry name" value="TM4_1"/>
    <property type="match status" value="1"/>
</dbReference>
<protein>
    <recommendedName>
        <fullName>CD81 antigen</fullName>
    </recommendedName>
    <alternativeName>
        <fullName>26 kDa cell surface protein TAPA-1</fullName>
    </alternativeName>
    <alternativeName>
        <fullName evidence="16">Target of the antiproliferative antibody 1</fullName>
    </alternativeName>
    <cdAntigenName>CD81</cdAntigenName>
</protein>
<keyword id="KW-0002">3D-structure</keyword>
<keyword id="KW-1064">Adaptive immunity</keyword>
<keyword id="KW-1003">Cell membrane</keyword>
<keyword id="KW-0903">Direct protein sequencing</keyword>
<keyword id="KW-1015">Disulfide bond</keyword>
<keyword id="KW-0391">Immunity</keyword>
<keyword id="KW-0446">Lipid-binding</keyword>
<keyword id="KW-0472">Membrane</keyword>
<keyword id="KW-1185">Reference proteome</keyword>
<keyword id="KW-0812">Transmembrane</keyword>
<keyword id="KW-1133">Transmembrane helix</keyword>
<reference key="1">
    <citation type="journal article" date="1991" name="J. Immunol.">
        <title>Genomic organization and chromosomal localization of the TAPA-1 gene.</title>
        <authorList>
            <person name="Andria M.L."/>
            <person name="Hsieh C.L."/>
            <person name="Oren R."/>
            <person name="Francke U."/>
            <person name="Levy S."/>
        </authorList>
    </citation>
    <scope>NUCLEOTIDE SEQUENCE [GENOMIC DNA]</scope>
</reference>
<reference key="2">
    <citation type="journal article" date="2000" name="Hum. Mol. Genet.">
        <title>Sequence conservation and variability of imprinting in the Beckwith-Wiedemann syndrome gene cluster in human and mouse.</title>
        <authorList>
            <person name="Paulsen M."/>
            <person name="El-Maarri O."/>
            <person name="Engemann S."/>
            <person name="Stroedicke M."/>
            <person name="Franck O."/>
            <person name="Davies K."/>
            <person name="Reinhardt R."/>
            <person name="Reik W."/>
            <person name="Walter J."/>
        </authorList>
    </citation>
    <scope>NUCLEOTIDE SEQUENCE [GENOMIC DNA]</scope>
    <source>
        <strain>129/Sv</strain>
    </source>
</reference>
<reference key="3">
    <citation type="journal article" date="2005" name="Science">
        <title>The transcriptional landscape of the mammalian genome.</title>
        <authorList>
            <person name="Carninci P."/>
            <person name="Kasukawa T."/>
            <person name="Katayama S."/>
            <person name="Gough J."/>
            <person name="Frith M.C."/>
            <person name="Maeda N."/>
            <person name="Oyama R."/>
            <person name="Ravasi T."/>
            <person name="Lenhard B."/>
            <person name="Wells C."/>
            <person name="Kodzius R."/>
            <person name="Shimokawa K."/>
            <person name="Bajic V.B."/>
            <person name="Brenner S.E."/>
            <person name="Batalov S."/>
            <person name="Forrest A.R."/>
            <person name="Zavolan M."/>
            <person name="Davis M.J."/>
            <person name="Wilming L.G."/>
            <person name="Aidinis V."/>
            <person name="Allen J.E."/>
            <person name="Ambesi-Impiombato A."/>
            <person name="Apweiler R."/>
            <person name="Aturaliya R.N."/>
            <person name="Bailey T.L."/>
            <person name="Bansal M."/>
            <person name="Baxter L."/>
            <person name="Beisel K.W."/>
            <person name="Bersano T."/>
            <person name="Bono H."/>
            <person name="Chalk A.M."/>
            <person name="Chiu K.P."/>
            <person name="Choudhary V."/>
            <person name="Christoffels A."/>
            <person name="Clutterbuck D.R."/>
            <person name="Crowe M.L."/>
            <person name="Dalla E."/>
            <person name="Dalrymple B.P."/>
            <person name="de Bono B."/>
            <person name="Della Gatta G."/>
            <person name="di Bernardo D."/>
            <person name="Down T."/>
            <person name="Engstrom P."/>
            <person name="Fagiolini M."/>
            <person name="Faulkner G."/>
            <person name="Fletcher C.F."/>
            <person name="Fukushima T."/>
            <person name="Furuno M."/>
            <person name="Futaki S."/>
            <person name="Gariboldi M."/>
            <person name="Georgii-Hemming P."/>
            <person name="Gingeras T.R."/>
            <person name="Gojobori T."/>
            <person name="Green R.E."/>
            <person name="Gustincich S."/>
            <person name="Harbers M."/>
            <person name="Hayashi Y."/>
            <person name="Hensch T.K."/>
            <person name="Hirokawa N."/>
            <person name="Hill D."/>
            <person name="Huminiecki L."/>
            <person name="Iacono M."/>
            <person name="Ikeo K."/>
            <person name="Iwama A."/>
            <person name="Ishikawa T."/>
            <person name="Jakt M."/>
            <person name="Kanapin A."/>
            <person name="Katoh M."/>
            <person name="Kawasawa Y."/>
            <person name="Kelso J."/>
            <person name="Kitamura H."/>
            <person name="Kitano H."/>
            <person name="Kollias G."/>
            <person name="Krishnan S.P."/>
            <person name="Kruger A."/>
            <person name="Kummerfeld S.K."/>
            <person name="Kurochkin I.V."/>
            <person name="Lareau L.F."/>
            <person name="Lazarevic D."/>
            <person name="Lipovich L."/>
            <person name="Liu J."/>
            <person name="Liuni S."/>
            <person name="McWilliam S."/>
            <person name="Madan Babu M."/>
            <person name="Madera M."/>
            <person name="Marchionni L."/>
            <person name="Matsuda H."/>
            <person name="Matsuzawa S."/>
            <person name="Miki H."/>
            <person name="Mignone F."/>
            <person name="Miyake S."/>
            <person name="Morris K."/>
            <person name="Mottagui-Tabar S."/>
            <person name="Mulder N."/>
            <person name="Nakano N."/>
            <person name="Nakauchi H."/>
            <person name="Ng P."/>
            <person name="Nilsson R."/>
            <person name="Nishiguchi S."/>
            <person name="Nishikawa S."/>
            <person name="Nori F."/>
            <person name="Ohara O."/>
            <person name="Okazaki Y."/>
            <person name="Orlando V."/>
            <person name="Pang K.C."/>
            <person name="Pavan W.J."/>
            <person name="Pavesi G."/>
            <person name="Pesole G."/>
            <person name="Petrovsky N."/>
            <person name="Piazza S."/>
            <person name="Reed J."/>
            <person name="Reid J.F."/>
            <person name="Ring B.Z."/>
            <person name="Ringwald M."/>
            <person name="Rost B."/>
            <person name="Ruan Y."/>
            <person name="Salzberg S.L."/>
            <person name="Sandelin A."/>
            <person name="Schneider C."/>
            <person name="Schoenbach C."/>
            <person name="Sekiguchi K."/>
            <person name="Semple C.A."/>
            <person name="Seno S."/>
            <person name="Sessa L."/>
            <person name="Sheng Y."/>
            <person name="Shibata Y."/>
            <person name="Shimada H."/>
            <person name="Shimada K."/>
            <person name="Silva D."/>
            <person name="Sinclair B."/>
            <person name="Sperling S."/>
            <person name="Stupka E."/>
            <person name="Sugiura K."/>
            <person name="Sultana R."/>
            <person name="Takenaka Y."/>
            <person name="Taki K."/>
            <person name="Tammoja K."/>
            <person name="Tan S.L."/>
            <person name="Tang S."/>
            <person name="Taylor M.S."/>
            <person name="Tegner J."/>
            <person name="Teichmann S.A."/>
            <person name="Ueda H.R."/>
            <person name="van Nimwegen E."/>
            <person name="Verardo R."/>
            <person name="Wei C.L."/>
            <person name="Yagi K."/>
            <person name="Yamanishi H."/>
            <person name="Zabarovsky E."/>
            <person name="Zhu S."/>
            <person name="Zimmer A."/>
            <person name="Hide W."/>
            <person name="Bult C."/>
            <person name="Grimmond S.M."/>
            <person name="Teasdale R.D."/>
            <person name="Liu E.T."/>
            <person name="Brusic V."/>
            <person name="Quackenbush J."/>
            <person name="Wahlestedt C."/>
            <person name="Mattick J.S."/>
            <person name="Hume D.A."/>
            <person name="Kai C."/>
            <person name="Sasaki D."/>
            <person name="Tomaru Y."/>
            <person name="Fukuda S."/>
            <person name="Kanamori-Katayama M."/>
            <person name="Suzuki M."/>
            <person name="Aoki J."/>
            <person name="Arakawa T."/>
            <person name="Iida J."/>
            <person name="Imamura K."/>
            <person name="Itoh M."/>
            <person name="Kato T."/>
            <person name="Kawaji H."/>
            <person name="Kawagashira N."/>
            <person name="Kawashima T."/>
            <person name="Kojima M."/>
            <person name="Kondo S."/>
            <person name="Konno H."/>
            <person name="Nakano K."/>
            <person name="Ninomiya N."/>
            <person name="Nishio T."/>
            <person name="Okada M."/>
            <person name="Plessy C."/>
            <person name="Shibata K."/>
            <person name="Shiraki T."/>
            <person name="Suzuki S."/>
            <person name="Tagami M."/>
            <person name="Waki K."/>
            <person name="Watahiki A."/>
            <person name="Okamura-Oho Y."/>
            <person name="Suzuki H."/>
            <person name="Kawai J."/>
            <person name="Hayashizaki Y."/>
        </authorList>
    </citation>
    <scope>NUCLEOTIDE SEQUENCE [LARGE SCALE MRNA]</scope>
    <source>
        <strain>NOD</strain>
        <tissue>Mammary gland</tissue>
    </source>
</reference>
<reference key="4">
    <citation type="journal article" date="2009" name="PLoS Biol.">
        <title>Lineage-specific biology revealed by a finished genome assembly of the mouse.</title>
        <authorList>
            <person name="Church D.M."/>
            <person name="Goodstadt L."/>
            <person name="Hillier L.W."/>
            <person name="Zody M.C."/>
            <person name="Goldstein S."/>
            <person name="She X."/>
            <person name="Bult C.J."/>
            <person name="Agarwala R."/>
            <person name="Cherry J.L."/>
            <person name="DiCuccio M."/>
            <person name="Hlavina W."/>
            <person name="Kapustin Y."/>
            <person name="Meric P."/>
            <person name="Maglott D."/>
            <person name="Birtle Z."/>
            <person name="Marques A.C."/>
            <person name="Graves T."/>
            <person name="Zhou S."/>
            <person name="Teague B."/>
            <person name="Potamousis K."/>
            <person name="Churas C."/>
            <person name="Place M."/>
            <person name="Herschleb J."/>
            <person name="Runnheim R."/>
            <person name="Forrest D."/>
            <person name="Amos-Landgraf J."/>
            <person name="Schwartz D.C."/>
            <person name="Cheng Z."/>
            <person name="Lindblad-Toh K."/>
            <person name="Eichler E.E."/>
            <person name="Ponting C.P."/>
        </authorList>
    </citation>
    <scope>NUCLEOTIDE SEQUENCE [LARGE SCALE GENOMIC DNA]</scope>
    <source>
        <strain>C57BL/6J</strain>
    </source>
</reference>
<reference key="5">
    <citation type="submission" date="2005-07" db="EMBL/GenBank/DDBJ databases">
        <authorList>
            <person name="Mural R.J."/>
            <person name="Adams M.D."/>
            <person name="Myers E.W."/>
            <person name="Smith H.O."/>
            <person name="Venter J.C."/>
        </authorList>
    </citation>
    <scope>NUCLEOTIDE SEQUENCE [LARGE SCALE GENOMIC DNA]</scope>
</reference>
<reference key="6">
    <citation type="journal article" date="2004" name="Genome Res.">
        <title>The status, quality, and expansion of the NIH full-length cDNA project: the Mammalian Gene Collection (MGC).</title>
        <authorList>
            <consortium name="The MGC Project Team"/>
        </authorList>
    </citation>
    <scope>NUCLEOTIDE SEQUENCE [LARGE SCALE MRNA]</scope>
    <source>
        <strain>FVB/N</strain>
        <tissue>Mammary tumor</tissue>
    </source>
</reference>
<reference key="7">
    <citation type="submission" date="1991-04" db="EMBL/GenBank/DDBJ databases">
        <authorList>
            <person name="Duff K."/>
            <person name="Parsons J."/>
        </authorList>
    </citation>
    <scope>NUCLEOTIDE SEQUENCE [MRNA] OF 11-236</scope>
    <source>
        <tissue>Heart</tissue>
    </source>
</reference>
<reference key="8">
    <citation type="submission" date="2007-04" db="UniProtKB">
        <authorList>
            <person name="Lubec G."/>
            <person name="Kang S.U."/>
        </authorList>
    </citation>
    <scope>PROTEIN SEQUENCE OF 125-144; 149-171 AND 194-201</scope>
    <scope>IDENTIFICATION BY MASS SPECTROMETRY</scope>
    <source>
        <strain>C57BL/6J</strain>
        <tissue>Brain</tissue>
    </source>
</reference>
<reference key="9">
    <citation type="journal article" date="2000" name="J. Immunol.">
        <title>Allergen-induced airway hyperreactivity is diminished in CD81-deficient mice.</title>
        <authorList>
            <person name="Deng J."/>
            <person name="Yeung V.P."/>
            <person name="Tsitoura D."/>
            <person name="DeKruyff R.H."/>
            <person name="Umetsu D.T."/>
            <person name="Levy S."/>
        </authorList>
    </citation>
    <scope>FUNCTION</scope>
    <scope>DISRUPTION PHENOTYPE</scope>
</reference>
<reference key="10">
    <citation type="journal article" date="2001" name="J. Immunol.">
        <title>PGRL is a major CD81-associated protein on lymphocytes and distinguishes a new family of cell surface proteins.</title>
        <authorList>
            <person name="Clark K.L."/>
            <person name="Zeng Z."/>
            <person name="Langford A.L."/>
            <person name="Bowen S.M."/>
            <person name="Todd S.C."/>
        </authorList>
    </citation>
    <scope>INTERACTION WITH IGSF8</scope>
</reference>
<reference key="11">
    <citation type="journal article" date="2003" name="J. Cell Biol.">
        <title>Tetraspanins CD9 and CD81 function to prevent the fusion of mononuclear phagocytes.</title>
        <authorList>
            <person name="Takeda Y."/>
            <person name="Tachibana I."/>
            <person name="Miyado K."/>
            <person name="Kobayashi M."/>
            <person name="Miyazaki T."/>
            <person name="Funakoshi T."/>
            <person name="Kimura H."/>
            <person name="Yamane H."/>
            <person name="Saito Y."/>
            <person name="Goto H."/>
            <person name="Yoneda T."/>
            <person name="Yoshida M."/>
            <person name="Kumagai T."/>
            <person name="Osaki T."/>
            <person name="Hayashi S."/>
            <person name="Kawase I."/>
            <person name="Mekada E."/>
        </authorList>
    </citation>
    <scope>FUNCTION</scope>
    <scope>DISRUPTION PHENOTYPE</scope>
</reference>
<reference key="12">
    <citation type="journal article" date="2003" name="Nat. Med.">
        <title>Hepatocyte CD81 is required for Plasmodium falciparum and Plasmodium yoelii sporozoite infectivity.</title>
        <authorList>
            <person name="Silvie O."/>
            <person name="Rubinstein E."/>
            <person name="Franetich J.F."/>
            <person name="Prenant M."/>
            <person name="Belnoue E."/>
            <person name="Renia L."/>
            <person name="Hannoun L."/>
            <person name="Eling W."/>
            <person name="Levy S."/>
            <person name="Boucheix C."/>
            <person name="Mazier D."/>
        </authorList>
    </citation>
    <scope>DISRUPTION PHENOTYPE (MICROBIAL INFECTION)</scope>
    <scope>FUNCTION (MICROBIAL INFECTION)</scope>
    <scope>TISSUE SPECIFICITY</scope>
</reference>
<reference key="13">
    <citation type="journal article" date="2006" name="Dev. Biol.">
        <title>Reduced fertility of female mice lacking CD81.</title>
        <authorList>
            <person name="Rubinstein E."/>
            <person name="Ziyyat A."/>
            <person name="Prenant M."/>
            <person name="Wrobel E."/>
            <person name="Wolf J.-P."/>
            <person name="Levy S."/>
            <person name="Le Naour F."/>
            <person name="Boucheix C."/>
        </authorList>
    </citation>
    <scope>DISRUPTION PHENOTYPE</scope>
    <scope>TISSUE SPECIFICITY</scope>
    <scope>FUNCTION</scope>
</reference>
<reference key="14">
    <citation type="journal article" date="2006" name="Genes Immun.">
        <title>Expression of the mouse fragilis gene products in immune cells and association with receptor signaling complexes.</title>
        <authorList>
            <person name="Smith R.A."/>
            <person name="Young J."/>
            <person name="Weis J.J."/>
            <person name="Weis J.H."/>
        </authorList>
    </citation>
    <scope>INTERACTION WITH IFITM2 AND IFITM3</scope>
</reference>
<reference key="15">
    <citation type="journal article" date="2008" name="J. Biol. Chem.">
        <title>Double deficiency of tetraspanins CD9 and CD81 alters cell motility and protease production of macrophages and causes chronic obstructive pulmonary disease-like phenotype in mice.</title>
        <authorList>
            <person name="Takeda Y."/>
            <person name="He P."/>
            <person name="Tachibana I."/>
            <person name="Zhou B."/>
            <person name="Miyado K."/>
            <person name="Kaneko H."/>
            <person name="Suzuki M."/>
            <person name="Minami S."/>
            <person name="Iwasaki T."/>
            <person name="Goya S."/>
            <person name="Kijima T."/>
            <person name="Kumagai T."/>
            <person name="Yoshida M."/>
            <person name="Osaki T."/>
            <person name="Komori T."/>
            <person name="Mekada E."/>
            <person name="Kawase I."/>
        </authorList>
    </citation>
    <scope>FUNCTION</scope>
    <scope>DISRUPTION PHENOTYPE</scope>
</reference>
<reference key="16">
    <citation type="journal article" date="2008" name="Mol. Reprod. Dev.">
        <title>Possible involvement of CD81 in acrosome reaction of sperm in mice.</title>
        <authorList>
            <person name="Tanigawa M."/>
            <person name="Miyamoto K."/>
            <person name="Kobayashi S."/>
            <person name="Sato M."/>
            <person name="Akutsu H."/>
            <person name="Okabe M."/>
            <person name="Mekada E."/>
            <person name="Sakakibara K."/>
            <person name="Miyado M."/>
            <person name="Umezawa A."/>
            <person name="Miyado K."/>
        </authorList>
    </citation>
    <scope>DISRUPTION PHENOTYPE</scope>
    <scope>TISSUE SPECIFICITY</scope>
    <scope>FUNCTION IN ACROSOME REACTION</scope>
</reference>
<reference key="17">
    <citation type="journal article" date="2010" name="Cell">
        <title>A tissue-specific atlas of mouse protein phosphorylation and expression.</title>
        <authorList>
            <person name="Huttlin E.L."/>
            <person name="Jedrychowski M.P."/>
            <person name="Elias J.E."/>
            <person name="Goswami T."/>
            <person name="Rad R."/>
            <person name="Beausoleil S.A."/>
            <person name="Villen J."/>
            <person name="Haas W."/>
            <person name="Sowa M.E."/>
            <person name="Gygi S.P."/>
        </authorList>
    </citation>
    <scope>IDENTIFICATION BY MASS SPECTROMETRY [LARGE SCALE ANALYSIS]</scope>
    <source>
        <tissue>Brain</tissue>
        <tissue>Brown adipose tissue</tissue>
        <tissue>Heart</tissue>
        <tissue>Kidney</tissue>
        <tissue>Liver</tissue>
        <tissue>Lung</tissue>
        <tissue>Pancreas</tissue>
        <tissue>Spleen</tissue>
        <tissue>Testis</tissue>
    </source>
</reference>
<reference key="18">
    <citation type="journal article" date="2012" name="Biol. Open">
        <title>CD81 and CD9 work independently as extracellular components upon fusion of sperm and oocyte.</title>
        <authorList>
            <person name="Ohnami N."/>
            <person name="Nakamura A."/>
            <person name="Miyado M."/>
            <person name="Sato M."/>
            <person name="Kawano N."/>
            <person name="Yoshida K."/>
            <person name="Harada Y."/>
            <person name="Takezawa Y."/>
            <person name="Kanai S."/>
            <person name="Ono C."/>
            <person name="Takahashi Y."/>
            <person name="Kimura K."/>
            <person name="Shida T."/>
            <person name="Miyado K."/>
            <person name="Umezawa A."/>
        </authorList>
    </citation>
    <scope>SUBCELLULAR LOCATION</scope>
    <scope>TISSUE SPECIFICITY</scope>
</reference>
<reference key="19">
    <citation type="journal article" date="2013" name="Am. J. Pathol.">
        <title>Regulation of liver growth by glypican 3, CD81, hedgehog, and Hhex.</title>
        <authorList>
            <person name="Bhave V.S."/>
            <person name="Mars W."/>
            <person name="Donthamsetty S."/>
            <person name="Zhang X."/>
            <person name="Tan L."/>
            <person name="Luo J."/>
            <person name="Bowen W.C."/>
            <person name="Michalopoulos G.K."/>
        </authorList>
    </citation>
    <scope>INTERACTION WITH GPC3 AND HHEX</scope>
</reference>
<reference key="20">
    <citation type="journal article" date="2013" name="Immunity">
        <title>The actin and tetraspanin networks organize receptor nanoclusters to regulate B cell receptor-mediated signaling.</title>
        <authorList>
            <person name="Mattila P.K."/>
            <person name="Feest C."/>
            <person name="Depoil D."/>
            <person name="Treanor B."/>
            <person name="Montaner B."/>
            <person name="Otipoby K.L."/>
            <person name="Carter R."/>
            <person name="Justement L.B."/>
            <person name="Bruckbauer A."/>
            <person name="Batista F.D."/>
        </authorList>
    </citation>
    <scope>FUNCTION</scope>
</reference>
<reference key="21">
    <citation type="journal article" date="2013" name="Nat. Commun.">
        <title>Normal muscle regeneration requires tight control of muscle cell fusion by tetraspanins CD9 and CD81.</title>
        <authorList>
            <person name="Charrin S."/>
            <person name="Latil M."/>
            <person name="Soave S."/>
            <person name="Polesskaya A."/>
            <person name="Chretien F."/>
            <person name="Boucheix C."/>
            <person name="Rubinstein E."/>
        </authorList>
    </citation>
    <scope>FUNCTION</scope>
    <scope>DISRUPTION PHENOTYPE</scope>
    <scope>TISSUE SPECIFICITY</scope>
    <scope>INDUCTION BY MYOTOXIC AGENTS</scope>
    <scope>INTERACTION WITH PTGFRN</scope>
    <scope>INTERACTION WITH CD9</scope>
    <scope>INTERACTION WITH IGSF8</scope>
</reference>
<reference evidence="19" key="22">
    <citation type="journal article" date="2015" name="FASEB J.">
        <title>An intramolecular bond at cluster of differentiation 81 ectodomain is important for hepatitis C virus entry.</title>
        <authorList>
            <person name="Yang W."/>
            <person name="Zhang M."/>
            <person name="Chi X."/>
            <person name="Liu X."/>
            <person name="Qin B."/>
            <person name="Cui S."/>
        </authorList>
    </citation>
    <scope>X-RAY CRYSTALLOGRAPHY (1.47 ANGSTROMS) OF 113-202</scope>
    <scope>DISULFIDE BONDS</scope>
</reference>